<reference key="1">
    <citation type="journal article" date="1997" name="Nature">
        <title>The nucleotide sequence of Saccharomyces cerevisiae chromosome XVI.</title>
        <authorList>
            <person name="Bussey H."/>
            <person name="Storms R.K."/>
            <person name="Ahmed A."/>
            <person name="Albermann K."/>
            <person name="Allen E."/>
            <person name="Ansorge W."/>
            <person name="Araujo R."/>
            <person name="Aparicio A."/>
            <person name="Barrell B.G."/>
            <person name="Badcock K."/>
            <person name="Benes V."/>
            <person name="Botstein D."/>
            <person name="Bowman S."/>
            <person name="Brueckner M."/>
            <person name="Carpenter J."/>
            <person name="Cherry J.M."/>
            <person name="Chung E."/>
            <person name="Churcher C.M."/>
            <person name="Coster F."/>
            <person name="Davis K."/>
            <person name="Davis R.W."/>
            <person name="Dietrich F.S."/>
            <person name="Delius H."/>
            <person name="DiPaolo T."/>
            <person name="Dubois E."/>
            <person name="Duesterhoeft A."/>
            <person name="Duncan M."/>
            <person name="Floeth M."/>
            <person name="Fortin N."/>
            <person name="Friesen J.D."/>
            <person name="Fritz C."/>
            <person name="Goffeau A."/>
            <person name="Hall J."/>
            <person name="Hebling U."/>
            <person name="Heumann K."/>
            <person name="Hilbert H."/>
            <person name="Hillier L.W."/>
            <person name="Hunicke-Smith S."/>
            <person name="Hyman R.W."/>
            <person name="Johnston M."/>
            <person name="Kalman S."/>
            <person name="Kleine K."/>
            <person name="Komp C."/>
            <person name="Kurdi O."/>
            <person name="Lashkari D."/>
            <person name="Lew H."/>
            <person name="Lin A."/>
            <person name="Lin D."/>
            <person name="Louis E.J."/>
            <person name="Marathe R."/>
            <person name="Messenguy F."/>
            <person name="Mewes H.-W."/>
            <person name="Mirtipati S."/>
            <person name="Moestl D."/>
            <person name="Mueller-Auer S."/>
            <person name="Namath A."/>
            <person name="Nentwich U."/>
            <person name="Oefner P."/>
            <person name="Pearson D."/>
            <person name="Petel F.X."/>
            <person name="Pohl T.M."/>
            <person name="Purnelle B."/>
            <person name="Rajandream M.A."/>
            <person name="Rechmann S."/>
            <person name="Rieger M."/>
            <person name="Riles L."/>
            <person name="Roberts D."/>
            <person name="Schaefer M."/>
            <person name="Scharfe M."/>
            <person name="Scherens B."/>
            <person name="Schramm S."/>
            <person name="Schroeder M."/>
            <person name="Sdicu A.-M."/>
            <person name="Tettelin H."/>
            <person name="Urrestarazu L.A."/>
            <person name="Ushinsky S."/>
            <person name="Vierendeels F."/>
            <person name="Vissers S."/>
            <person name="Voss H."/>
            <person name="Walsh S.V."/>
            <person name="Wambutt R."/>
            <person name="Wang Y."/>
            <person name="Wedler E."/>
            <person name="Wedler H."/>
            <person name="Winnett E."/>
            <person name="Zhong W.-W."/>
            <person name="Zollner A."/>
            <person name="Vo D.H."/>
            <person name="Hani J."/>
        </authorList>
    </citation>
    <scope>NUCLEOTIDE SEQUENCE [LARGE SCALE GENOMIC DNA]</scope>
    <source>
        <strain>ATCC 204508 / S288c</strain>
    </source>
</reference>
<reference key="2">
    <citation type="journal article" date="2014" name="G3 (Bethesda)">
        <title>The reference genome sequence of Saccharomyces cerevisiae: Then and now.</title>
        <authorList>
            <person name="Engel S.R."/>
            <person name="Dietrich F.S."/>
            <person name="Fisk D.G."/>
            <person name="Binkley G."/>
            <person name="Balakrishnan R."/>
            <person name="Costanzo M.C."/>
            <person name="Dwight S.S."/>
            <person name="Hitz B.C."/>
            <person name="Karra K."/>
            <person name="Nash R.S."/>
            <person name="Weng S."/>
            <person name="Wong E.D."/>
            <person name="Lloyd P."/>
            <person name="Skrzypek M.S."/>
            <person name="Miyasato S.R."/>
            <person name="Simison M."/>
            <person name="Cherry J.M."/>
        </authorList>
    </citation>
    <scope>GENOME REANNOTATION</scope>
    <source>
        <strain>ATCC 204508 / S288c</strain>
    </source>
</reference>
<reference key="3">
    <citation type="journal article" date="2007" name="Genome Res.">
        <title>Approaching a complete repository of sequence-verified protein-encoding clones for Saccharomyces cerevisiae.</title>
        <authorList>
            <person name="Hu Y."/>
            <person name="Rolfs A."/>
            <person name="Bhullar B."/>
            <person name="Murthy T.V.S."/>
            <person name="Zhu C."/>
            <person name="Berger M.F."/>
            <person name="Camargo A.A."/>
            <person name="Kelley F."/>
            <person name="McCarron S."/>
            <person name="Jepson D."/>
            <person name="Richardson A."/>
            <person name="Raphael J."/>
            <person name="Moreira D."/>
            <person name="Taycher E."/>
            <person name="Zuo D."/>
            <person name="Mohr S."/>
            <person name="Kane M.F."/>
            <person name="Williamson J."/>
            <person name="Simpson A.J.G."/>
            <person name="Bulyk M.L."/>
            <person name="Harlow E."/>
            <person name="Marsischky G."/>
            <person name="Kolodner R.D."/>
            <person name="LaBaer J."/>
        </authorList>
    </citation>
    <scope>NUCLEOTIDE SEQUENCE [GENOMIC DNA]</scope>
    <source>
        <strain>ATCC 204508 / S288c</strain>
    </source>
</reference>
<reference key="4">
    <citation type="journal article" date="2003" name="Nature">
        <title>Global analysis of protein localization in budding yeast.</title>
        <authorList>
            <person name="Huh W.-K."/>
            <person name="Falvo J.V."/>
            <person name="Gerke L.C."/>
            <person name="Carroll A.S."/>
            <person name="Howson R.W."/>
            <person name="Weissman J.S."/>
            <person name="O'Shea E.K."/>
        </authorList>
    </citation>
    <scope>SUBCELLULAR LOCATION [LARGE SCALE ANALYSIS]</scope>
</reference>
<reference key="5">
    <citation type="journal article" date="2003" name="Nature">
        <title>Global analysis of protein expression in yeast.</title>
        <authorList>
            <person name="Ghaemmaghami S."/>
            <person name="Huh W.-K."/>
            <person name="Bower K."/>
            <person name="Howson R.W."/>
            <person name="Belle A."/>
            <person name="Dephoure N."/>
            <person name="O'Shea E.K."/>
            <person name="Weissman J.S."/>
        </authorList>
    </citation>
    <scope>LEVEL OF PROTEIN EXPRESSION [LARGE SCALE ANALYSIS]</scope>
</reference>
<reference key="6">
    <citation type="journal article" date="2006" name="Genome Biol.">
        <title>Comparative analysis of Saccharomyces cerevisiae WW domains and their interacting proteins.</title>
        <authorList>
            <person name="Hesselberth J.R."/>
            <person name="Miller J.P."/>
            <person name="Golob A."/>
            <person name="Stajich J.E."/>
            <person name="Michaud G.A."/>
            <person name="Fields S."/>
        </authorList>
    </citation>
    <scope>DOMAIN</scope>
</reference>
<reference key="7">
    <citation type="journal article" date="2008" name="Mol. Cell. Proteomics">
        <title>A multidimensional chromatography technology for in-depth phosphoproteome analysis.</title>
        <authorList>
            <person name="Albuquerque C.P."/>
            <person name="Smolka M.B."/>
            <person name="Payne S.H."/>
            <person name="Bafna V."/>
            <person name="Eng J."/>
            <person name="Zhou H."/>
        </authorList>
    </citation>
    <scope>PHOSPHORYLATION [LARGE SCALE ANALYSIS] AT SER-150</scope>
    <scope>IDENTIFICATION BY MASS SPECTROMETRY [LARGE SCALE ANALYSIS]</scope>
</reference>
<reference key="8">
    <citation type="journal article" date="2013" name="FEBS J.">
        <title>Rapid screening of yeast mutants with reporters identifies new splicing phenotypes.</title>
        <authorList>
            <person name="Dreumont N."/>
            <person name="Seraphin B."/>
        </authorList>
    </citation>
    <scope>FUNCTION</scope>
</reference>
<reference key="9">
    <citation type="journal article" date="2009" name="Mol. Cell">
        <title>The evolutionarily conserved core design of the catalytic activation step of the yeast spliceosome.</title>
        <authorList>
            <person name="Fabrizio P."/>
            <person name="Dannenberg J."/>
            <person name="Dube P."/>
            <person name="Kastner B."/>
            <person name="Stark H."/>
            <person name="Urlaub H."/>
            <person name="Luhrmann R."/>
        </authorList>
    </citation>
    <scope>IDENTIFICATION IN THE PRECATALYTIC SPLICEOSOMAL COMPLEX B</scope>
    <scope>IDENTIFICATION BY MASS SPECTROMETRY</scope>
</reference>
<reference key="10">
    <citation type="journal article" date="2011" name="PLoS ONE">
        <title>Systematic two-hybrid and comparative proteomic analyses reveal novel yeast pre-mRNA splicing factors connected to Prp19.</title>
        <authorList>
            <person name="Ren L."/>
            <person name="McLean J.R."/>
            <person name="Hazbun T.R."/>
            <person name="Fields S."/>
            <person name="Vander Kooi C."/>
            <person name="Ohi M.D."/>
            <person name="Gould K.L."/>
        </authorList>
    </citation>
    <scope>INTERACTION WITH PRP19</scope>
    <scope>FUNCTION</scope>
</reference>
<reference key="11">
    <citation type="journal article" date="2008" name="Proteins">
        <title>Solution structure of the yeast URN1 splicing factor FF domain: comparative analysis of charge distributions in FF domain structures-FFs and SURPs, two domains with a similar fold.</title>
        <authorList>
            <person name="Bonet R."/>
            <person name="Ramirez-Espain X."/>
            <person name="Macias M.J."/>
        </authorList>
    </citation>
    <scope>STRUCTURE BY NMR OF 212-266</scope>
    <scope>DOMAIN</scope>
</reference>
<protein>
    <recommendedName>
        <fullName>Pre-mRNA-splicing factor URN1</fullName>
    </recommendedName>
    <alternativeName>
        <fullName>U2-U5-U6 snRNP, RES complex and NTC-interacting pre-mRNA-splicing factor 1</fullName>
    </alternativeName>
</protein>
<keyword id="KW-0002">3D-structure</keyword>
<keyword id="KW-0507">mRNA processing</keyword>
<keyword id="KW-0508">mRNA splicing</keyword>
<keyword id="KW-0539">Nucleus</keyword>
<keyword id="KW-0597">Phosphoprotein</keyword>
<keyword id="KW-1185">Reference proteome</keyword>
<keyword id="KW-0747">Spliceosome</keyword>
<organism>
    <name type="scientific">Saccharomyces cerevisiae (strain ATCC 204508 / S288c)</name>
    <name type="common">Baker's yeast</name>
    <dbReference type="NCBI Taxonomy" id="559292"/>
    <lineage>
        <taxon>Eukaryota</taxon>
        <taxon>Fungi</taxon>
        <taxon>Dikarya</taxon>
        <taxon>Ascomycota</taxon>
        <taxon>Saccharomycotina</taxon>
        <taxon>Saccharomycetes</taxon>
        <taxon>Saccharomycetales</taxon>
        <taxon>Saccharomycetaceae</taxon>
        <taxon>Saccharomyces</taxon>
    </lineage>
</organism>
<dbReference type="EMBL" id="U40829">
    <property type="protein sequence ID" value="AAB68289.1"/>
    <property type="molecule type" value="Genomic_DNA"/>
</dbReference>
<dbReference type="EMBL" id="AY692740">
    <property type="protein sequence ID" value="AAT92759.1"/>
    <property type="molecule type" value="Genomic_DNA"/>
</dbReference>
<dbReference type="EMBL" id="BK006949">
    <property type="protein sequence ID" value="DAA11564.1"/>
    <property type="molecule type" value="Genomic_DNA"/>
</dbReference>
<dbReference type="PIR" id="S69038">
    <property type="entry name" value="S69038"/>
</dbReference>
<dbReference type="RefSeq" id="NP_015478.1">
    <property type="nucleotide sequence ID" value="NM_001184249.1"/>
</dbReference>
<dbReference type="PDB" id="2JUC">
    <property type="method" value="NMR"/>
    <property type="chains" value="A=212-266"/>
</dbReference>
<dbReference type="PDBsum" id="2JUC"/>
<dbReference type="BMRB" id="Q06525"/>
<dbReference type="SMR" id="Q06525"/>
<dbReference type="BioGRID" id="36319">
    <property type="interactions" value="276"/>
</dbReference>
<dbReference type="DIP" id="DIP-2017N"/>
<dbReference type="FunCoup" id="Q06525">
    <property type="interactions" value="200"/>
</dbReference>
<dbReference type="IntAct" id="Q06525">
    <property type="interactions" value="69"/>
</dbReference>
<dbReference type="MINT" id="Q06525"/>
<dbReference type="STRING" id="4932.YPR152C"/>
<dbReference type="iPTMnet" id="Q06525"/>
<dbReference type="PaxDb" id="4932-YPR152C"/>
<dbReference type="PeptideAtlas" id="Q06525"/>
<dbReference type="EnsemblFungi" id="YPR152C_mRNA">
    <property type="protein sequence ID" value="YPR152C"/>
    <property type="gene ID" value="YPR152C"/>
</dbReference>
<dbReference type="GeneID" id="856275"/>
<dbReference type="KEGG" id="sce:YPR152C"/>
<dbReference type="AGR" id="SGD:S000006356"/>
<dbReference type="SGD" id="S000006356">
    <property type="gene designation" value="URN1"/>
</dbReference>
<dbReference type="VEuPathDB" id="FungiDB:YPR152C"/>
<dbReference type="eggNOG" id="KOG0152">
    <property type="taxonomic scope" value="Eukaryota"/>
</dbReference>
<dbReference type="HOGENOM" id="CLU_039649_0_0_1"/>
<dbReference type="InParanoid" id="Q06525"/>
<dbReference type="OMA" id="EPTKYHY"/>
<dbReference type="OrthoDB" id="410044at2759"/>
<dbReference type="BioCyc" id="YEAST:G3O-34283-MONOMER"/>
<dbReference type="BioGRID-ORCS" id="856275">
    <property type="hits" value="2 hits in 10 CRISPR screens"/>
</dbReference>
<dbReference type="EvolutionaryTrace" id="Q06525"/>
<dbReference type="PRO" id="PR:Q06525"/>
<dbReference type="Proteomes" id="UP000002311">
    <property type="component" value="Chromosome XVI"/>
</dbReference>
<dbReference type="RNAct" id="Q06525">
    <property type="molecule type" value="protein"/>
</dbReference>
<dbReference type="GO" id="GO:0005634">
    <property type="term" value="C:nucleus"/>
    <property type="evidence" value="ECO:0007005"/>
    <property type="project" value="SGD"/>
</dbReference>
<dbReference type="GO" id="GO:0071010">
    <property type="term" value="C:prespliceosome"/>
    <property type="evidence" value="ECO:0000314"/>
    <property type="project" value="SGD"/>
</dbReference>
<dbReference type="GO" id="GO:0005685">
    <property type="term" value="C:U1 snRNP"/>
    <property type="evidence" value="ECO:0000318"/>
    <property type="project" value="GO_Central"/>
</dbReference>
<dbReference type="GO" id="GO:0071004">
    <property type="term" value="C:U2-type prespliceosome"/>
    <property type="evidence" value="ECO:0000318"/>
    <property type="project" value="GO_Central"/>
</dbReference>
<dbReference type="GO" id="GO:0003723">
    <property type="term" value="F:RNA binding"/>
    <property type="evidence" value="ECO:0000318"/>
    <property type="project" value="GO_Central"/>
</dbReference>
<dbReference type="GO" id="GO:0045292">
    <property type="term" value="P:mRNA cis splicing, via spliceosome"/>
    <property type="evidence" value="ECO:0007669"/>
    <property type="project" value="InterPro"/>
</dbReference>
<dbReference type="GO" id="GO:0000398">
    <property type="term" value="P:mRNA splicing, via spliceosome"/>
    <property type="evidence" value="ECO:0000318"/>
    <property type="project" value="GO_Central"/>
</dbReference>
<dbReference type="CDD" id="cd00201">
    <property type="entry name" value="WW"/>
    <property type="match status" value="1"/>
</dbReference>
<dbReference type="FunFam" id="1.10.10.440:FF:000042">
    <property type="entry name" value="Pre-mRNA-splicing factor URN1"/>
    <property type="match status" value="1"/>
</dbReference>
<dbReference type="Gene3D" id="2.20.70.10">
    <property type="match status" value="1"/>
</dbReference>
<dbReference type="Gene3D" id="1.10.10.440">
    <property type="entry name" value="FF domain"/>
    <property type="match status" value="1"/>
</dbReference>
<dbReference type="InterPro" id="IPR002713">
    <property type="entry name" value="FF_domain"/>
</dbReference>
<dbReference type="InterPro" id="IPR036517">
    <property type="entry name" value="FF_domain_sf"/>
</dbReference>
<dbReference type="InterPro" id="IPR039726">
    <property type="entry name" value="Prp40-like"/>
</dbReference>
<dbReference type="InterPro" id="IPR001202">
    <property type="entry name" value="WW_dom"/>
</dbReference>
<dbReference type="InterPro" id="IPR036020">
    <property type="entry name" value="WW_dom_sf"/>
</dbReference>
<dbReference type="PANTHER" id="PTHR11864">
    <property type="entry name" value="PRE-MRNA-PROCESSING PROTEIN PRP40"/>
    <property type="match status" value="1"/>
</dbReference>
<dbReference type="PANTHER" id="PTHR11864:SF30">
    <property type="entry name" value="PRE-MRNA-SPLICING FACTOR URN1"/>
    <property type="match status" value="1"/>
</dbReference>
<dbReference type="Pfam" id="PF01846">
    <property type="entry name" value="FF"/>
    <property type="match status" value="1"/>
</dbReference>
<dbReference type="Pfam" id="PF00397">
    <property type="entry name" value="WW"/>
    <property type="match status" value="1"/>
</dbReference>
<dbReference type="SMART" id="SM00441">
    <property type="entry name" value="FF"/>
    <property type="match status" value="1"/>
</dbReference>
<dbReference type="SMART" id="SM00456">
    <property type="entry name" value="WW"/>
    <property type="match status" value="1"/>
</dbReference>
<dbReference type="SUPFAM" id="SSF81698">
    <property type="entry name" value="FF domain"/>
    <property type="match status" value="1"/>
</dbReference>
<dbReference type="SUPFAM" id="SSF51045">
    <property type="entry name" value="WW domain"/>
    <property type="match status" value="1"/>
</dbReference>
<dbReference type="PROSITE" id="PS51676">
    <property type="entry name" value="FF"/>
    <property type="match status" value="1"/>
</dbReference>
<dbReference type="PROSITE" id="PS01159">
    <property type="entry name" value="WW_DOMAIN_1"/>
    <property type="match status" value="1"/>
</dbReference>
<dbReference type="PROSITE" id="PS50020">
    <property type="entry name" value="WW_DOMAIN_2"/>
    <property type="match status" value="1"/>
</dbReference>
<gene>
    <name type="primary">URN1</name>
    <name type="ordered locus">YPR152C</name>
</gene>
<comment type="function">
    <text evidence="6 7">Component of the spliceosome involved in mRNA processing.</text>
</comment>
<comment type="subunit">
    <text evidence="5 6">Component of the precatalytic spliceosomal complex B. Interacts with PRP19.</text>
</comment>
<comment type="interaction">
    <interactant intactId="EBI-35138">
        <id>Q06525</id>
    </interactant>
    <interactant intactId="EBI-20939">
        <id>P38305</id>
        <label>AIM4</label>
    </interactant>
    <organismsDiffer>false</organismsDiffer>
    <experiments>7</experiments>
</comment>
<comment type="interaction">
    <interactant intactId="EBI-35138">
        <id>Q06525</id>
    </interactant>
    <interactant intactId="EBI-493">
        <id>P32523</id>
        <label>PRP19</label>
    </interactant>
    <organismsDiffer>false</organismsDiffer>
    <experiments>7</experiments>
</comment>
<comment type="subcellular location">
    <subcellularLocation>
        <location evidence="3">Nucleus</location>
    </subcellularLocation>
</comment>
<comment type="miscellaneous">
    <text evidence="4">Present with 1310 molecules/cell in log phase SD medium.</text>
</comment>
<name>URN1_YEAST</name>
<sequence>MRGEWQEFKTPAGKKYYYNKNTKQSRWEKPNLKKGSNLESNAKESQTERKPTFSLELVNGWHLIIYNDGTKLYFNDDSKEFKNDISQEDDSRCRSLIESLDKEKLVLLIGVARGYTMREEDIDKILESCNEEIHLFKRNQDEVERKDEISEEAGDVKSPLQESHTGLVSGYGSSSGEEDEEEDEEEDEENEEQIVNQDISIIDDLNRIDTDDIDERNIFFELFDRYKLDKFSTWSLQSKKIENDPDFYKIRDDTVRESLFEEWCGERSGNATAEESDSEDNSEDDSEVLEPTKYHYLAQIVANAGTIAPDTIPQDIRKQQKALYKAYKIKEYIPSKRDQDKFVSQLLFYYKTFDLEQRKEIFCDCLRDHERDFTGAVESLRQDKELIDRWQTLLKAPADSSSIEDILLSIEHRCCVSPIVVTEPRYYVVGILEKTVVWVRWLAAEVGPSSRFTPVGAGNEPINPE</sequence>
<accession>Q06525</accession>
<accession>D6W4E8</accession>
<evidence type="ECO:0000255" key="1">
    <source>
        <dbReference type="PROSITE-ProRule" id="PRU00224"/>
    </source>
</evidence>
<evidence type="ECO:0000256" key="2">
    <source>
        <dbReference type="SAM" id="MobiDB-lite"/>
    </source>
</evidence>
<evidence type="ECO:0000269" key="3">
    <source>
    </source>
</evidence>
<evidence type="ECO:0000269" key="4">
    <source>
    </source>
</evidence>
<evidence type="ECO:0000269" key="5">
    <source>
    </source>
</evidence>
<evidence type="ECO:0000269" key="6">
    <source>
    </source>
</evidence>
<evidence type="ECO:0000269" key="7">
    <source>
    </source>
</evidence>
<evidence type="ECO:0007744" key="8">
    <source>
    </source>
</evidence>
<evidence type="ECO:0007829" key="9">
    <source>
        <dbReference type="PDB" id="2JUC"/>
    </source>
</evidence>
<proteinExistence type="evidence at protein level"/>
<feature type="chain" id="PRO_0000244477" description="Pre-mRNA-splicing factor URN1">
    <location>
        <begin position="1"/>
        <end position="465"/>
    </location>
</feature>
<feature type="domain" description="WW" evidence="1">
    <location>
        <begin position="1"/>
        <end position="32"/>
    </location>
</feature>
<feature type="domain" description="FF">
    <location>
        <begin position="212"/>
        <end position="266"/>
    </location>
</feature>
<feature type="region of interest" description="Disordered" evidence="2">
    <location>
        <begin position="28"/>
        <end position="49"/>
    </location>
</feature>
<feature type="region of interest" description="Disordered" evidence="2">
    <location>
        <begin position="144"/>
        <end position="198"/>
    </location>
</feature>
<feature type="region of interest" description="Disordered" evidence="2">
    <location>
        <begin position="266"/>
        <end position="288"/>
    </location>
</feature>
<feature type="compositionally biased region" description="Polar residues" evidence="2">
    <location>
        <begin position="160"/>
        <end position="175"/>
    </location>
</feature>
<feature type="compositionally biased region" description="Acidic residues" evidence="2">
    <location>
        <begin position="176"/>
        <end position="192"/>
    </location>
</feature>
<feature type="compositionally biased region" description="Acidic residues" evidence="2">
    <location>
        <begin position="274"/>
        <end position="288"/>
    </location>
</feature>
<feature type="modified residue" description="Phosphoserine" evidence="8">
    <location>
        <position position="150"/>
    </location>
</feature>
<feature type="helix" evidence="9">
    <location>
        <begin position="216"/>
        <end position="225"/>
    </location>
</feature>
<feature type="turn" evidence="9">
    <location>
        <begin position="230"/>
        <end position="232"/>
    </location>
</feature>
<feature type="helix" evidence="9">
    <location>
        <begin position="235"/>
        <end position="241"/>
    </location>
</feature>
<feature type="strand" evidence="9">
    <location>
        <begin position="242"/>
        <end position="244"/>
    </location>
</feature>
<feature type="helix" evidence="9">
    <location>
        <begin position="247"/>
        <end position="249"/>
    </location>
</feature>
<feature type="helix" evidence="9">
    <location>
        <begin position="253"/>
        <end position="264"/>
    </location>
</feature>